<proteinExistence type="inferred from homology"/>
<protein>
    <recommendedName>
        <fullName evidence="1">Maturase K</fullName>
    </recommendedName>
    <alternativeName>
        <fullName evidence="1">Intron maturase</fullName>
    </alternativeName>
</protein>
<feature type="chain" id="PRO_0000143321" description="Maturase K">
    <location>
        <begin position="1"/>
        <end position="503"/>
    </location>
</feature>
<gene>
    <name evidence="1" type="primary">matK</name>
</gene>
<name>MATK_CERBE</name>
<reference key="1">
    <citation type="journal article" date="2002" name="Plant Syst. Evol.">
        <title>Phylogenetic relationships in Rosaceae inferred from chloroplast matK and trnL-trnF nucleotide sequence data.</title>
        <authorList>
            <person name="Potter D."/>
            <person name="Gao F."/>
            <person name="Bortiri P.E."/>
            <person name="Oh S.-H."/>
            <person name="Baggett S."/>
        </authorList>
    </citation>
    <scope>NUCLEOTIDE SEQUENCE [GENOMIC DNA]</scope>
</reference>
<accession>Q8WJR3</accession>
<dbReference type="EMBL" id="AF288095">
    <property type="protein sequence ID" value="AAL35989.1"/>
    <property type="molecule type" value="Genomic_DNA"/>
</dbReference>
<dbReference type="GO" id="GO:0009507">
    <property type="term" value="C:chloroplast"/>
    <property type="evidence" value="ECO:0007669"/>
    <property type="project" value="UniProtKB-SubCell"/>
</dbReference>
<dbReference type="GO" id="GO:0003723">
    <property type="term" value="F:RNA binding"/>
    <property type="evidence" value="ECO:0007669"/>
    <property type="project" value="UniProtKB-KW"/>
</dbReference>
<dbReference type="GO" id="GO:0006397">
    <property type="term" value="P:mRNA processing"/>
    <property type="evidence" value="ECO:0007669"/>
    <property type="project" value="UniProtKB-KW"/>
</dbReference>
<dbReference type="GO" id="GO:0008380">
    <property type="term" value="P:RNA splicing"/>
    <property type="evidence" value="ECO:0007669"/>
    <property type="project" value="UniProtKB-UniRule"/>
</dbReference>
<dbReference type="GO" id="GO:0008033">
    <property type="term" value="P:tRNA processing"/>
    <property type="evidence" value="ECO:0007669"/>
    <property type="project" value="UniProtKB-KW"/>
</dbReference>
<dbReference type="HAMAP" id="MF_01390">
    <property type="entry name" value="MatK"/>
    <property type="match status" value="1"/>
</dbReference>
<dbReference type="InterPro" id="IPR024937">
    <property type="entry name" value="Domain_X"/>
</dbReference>
<dbReference type="InterPro" id="IPR002866">
    <property type="entry name" value="Maturase_MatK"/>
</dbReference>
<dbReference type="InterPro" id="IPR024942">
    <property type="entry name" value="Maturase_MatK_N"/>
</dbReference>
<dbReference type="PANTHER" id="PTHR34811">
    <property type="entry name" value="MATURASE K"/>
    <property type="match status" value="1"/>
</dbReference>
<dbReference type="PANTHER" id="PTHR34811:SF1">
    <property type="entry name" value="MATURASE K"/>
    <property type="match status" value="1"/>
</dbReference>
<dbReference type="Pfam" id="PF01348">
    <property type="entry name" value="Intron_maturas2"/>
    <property type="match status" value="1"/>
</dbReference>
<dbReference type="Pfam" id="PF01824">
    <property type="entry name" value="MatK_N"/>
    <property type="match status" value="1"/>
</dbReference>
<geneLocation type="chloroplast"/>
<keyword id="KW-0150">Chloroplast</keyword>
<keyword id="KW-0507">mRNA processing</keyword>
<keyword id="KW-0934">Plastid</keyword>
<keyword id="KW-0694">RNA-binding</keyword>
<keyword id="KW-0819">tRNA processing</keyword>
<organism>
    <name type="scientific">Cercocarpus betuloides</name>
    <name type="common">Mountain mahogany</name>
    <dbReference type="NCBI Taxonomy" id="140994"/>
    <lineage>
        <taxon>Eukaryota</taxon>
        <taxon>Viridiplantae</taxon>
        <taxon>Streptophyta</taxon>
        <taxon>Embryophyta</taxon>
        <taxon>Tracheophyta</taxon>
        <taxon>Spermatophyta</taxon>
        <taxon>Magnoliopsida</taxon>
        <taxon>eudicotyledons</taxon>
        <taxon>Gunneridae</taxon>
        <taxon>Pentapetalae</taxon>
        <taxon>rosids</taxon>
        <taxon>fabids</taxon>
        <taxon>Rosales</taxon>
        <taxon>Rosaceae</taxon>
        <taxon>Dryadoideae</taxon>
        <taxon>Cercocarpus</taxon>
    </lineage>
</organism>
<sequence>MEEFQGYLELDRSQQHDFLYPLIFREYIYALAHDHGLNRSILLDNVGYDNKSSFLIIKRLISRMYQQNHLIISPNDSNQKKIGGYNKNLYCQMISEGFAVIVEIPFSLRLVSSLEGTEIVKSYNLRSIHSIFPFLEDKFSHLNYVSDVLIPYPIHLEILVQTLRYWAKDPSYLHLLRLFLHDYYNLNSLITKNKSIFSKSNPRLFLLLYNSYVCEYESILLFLRNQSSHLQFTSSWIFFERIHFYEKIKYPVEEVFANDFPAILWFFKDPFMHYVRYQGKSILASKDTPLLMNKWKYYLVNLWQCHFYVWSQPGRIYINQLSKHSLDFLGYLSSIRPNLSVVRSQMLENSFIMDNARKKFDTLVPIIPLIGSLAKVKFCNALGHPISKSTWADSSDFDIIDRFVRICRNLSHYYSGSSKKKSLYQIKYILRLSCVKTLARKHKSTVRTFLKRLGSKLLEEFFTEEEQILSLIFPRASSTLTRFYRGRIWYLDIFCINDLVNHE</sequence>
<evidence type="ECO:0000255" key="1">
    <source>
        <dbReference type="HAMAP-Rule" id="MF_01390"/>
    </source>
</evidence>
<comment type="function">
    <text evidence="1">Usually encoded in the trnK tRNA gene intron. Probably assists in splicing its own and other chloroplast group II introns.</text>
</comment>
<comment type="subcellular location">
    <subcellularLocation>
        <location>Plastid</location>
        <location>Chloroplast</location>
    </subcellularLocation>
</comment>
<comment type="similarity">
    <text evidence="1">Belongs to the intron maturase 2 family. MatK subfamily.</text>
</comment>